<feature type="chain" id="PRO_0000155347" description="Thymidylate kinase">
    <location>
        <begin position="1"/>
        <end position="211"/>
    </location>
</feature>
<feature type="binding site" evidence="1">
    <location>
        <begin position="11"/>
        <end position="18"/>
    </location>
    <ligand>
        <name>ATP</name>
        <dbReference type="ChEBI" id="CHEBI:30616"/>
    </ligand>
</feature>
<dbReference type="EC" id="2.7.4.9" evidence="1"/>
<dbReference type="EMBL" id="AE009948">
    <property type="protein sequence ID" value="AAN00440.1"/>
    <property type="molecule type" value="Genomic_DNA"/>
</dbReference>
<dbReference type="RefSeq" id="NP_688567.1">
    <property type="nucleotide sequence ID" value="NC_004116.1"/>
</dbReference>
<dbReference type="RefSeq" id="WP_000715592.1">
    <property type="nucleotide sequence ID" value="NC_004116.1"/>
</dbReference>
<dbReference type="SMR" id="Q8DYB3"/>
<dbReference type="STRING" id="208435.SAG1575"/>
<dbReference type="GeneID" id="66886422"/>
<dbReference type="KEGG" id="sag:SAG1575"/>
<dbReference type="PATRIC" id="fig|208435.3.peg.1583"/>
<dbReference type="HOGENOM" id="CLU_049131_0_2_9"/>
<dbReference type="OrthoDB" id="9774907at2"/>
<dbReference type="Proteomes" id="UP000000821">
    <property type="component" value="Chromosome"/>
</dbReference>
<dbReference type="GO" id="GO:0005829">
    <property type="term" value="C:cytosol"/>
    <property type="evidence" value="ECO:0007669"/>
    <property type="project" value="TreeGrafter"/>
</dbReference>
<dbReference type="GO" id="GO:0005524">
    <property type="term" value="F:ATP binding"/>
    <property type="evidence" value="ECO:0007669"/>
    <property type="project" value="UniProtKB-UniRule"/>
</dbReference>
<dbReference type="GO" id="GO:0004798">
    <property type="term" value="F:dTMP kinase activity"/>
    <property type="evidence" value="ECO:0007669"/>
    <property type="project" value="UniProtKB-UniRule"/>
</dbReference>
<dbReference type="GO" id="GO:0006233">
    <property type="term" value="P:dTDP biosynthetic process"/>
    <property type="evidence" value="ECO:0007669"/>
    <property type="project" value="InterPro"/>
</dbReference>
<dbReference type="GO" id="GO:0006235">
    <property type="term" value="P:dTTP biosynthetic process"/>
    <property type="evidence" value="ECO:0007669"/>
    <property type="project" value="UniProtKB-UniRule"/>
</dbReference>
<dbReference type="GO" id="GO:0006227">
    <property type="term" value="P:dUDP biosynthetic process"/>
    <property type="evidence" value="ECO:0007669"/>
    <property type="project" value="TreeGrafter"/>
</dbReference>
<dbReference type="CDD" id="cd01672">
    <property type="entry name" value="TMPK"/>
    <property type="match status" value="1"/>
</dbReference>
<dbReference type="FunFam" id="3.40.50.300:FF:000225">
    <property type="entry name" value="Thymidylate kinase"/>
    <property type="match status" value="1"/>
</dbReference>
<dbReference type="Gene3D" id="3.40.50.300">
    <property type="entry name" value="P-loop containing nucleotide triphosphate hydrolases"/>
    <property type="match status" value="1"/>
</dbReference>
<dbReference type="HAMAP" id="MF_00165">
    <property type="entry name" value="Thymidylate_kinase"/>
    <property type="match status" value="1"/>
</dbReference>
<dbReference type="InterPro" id="IPR027417">
    <property type="entry name" value="P-loop_NTPase"/>
</dbReference>
<dbReference type="InterPro" id="IPR039430">
    <property type="entry name" value="Thymidylate_kin-like_dom"/>
</dbReference>
<dbReference type="InterPro" id="IPR018095">
    <property type="entry name" value="Thymidylate_kin_CS"/>
</dbReference>
<dbReference type="InterPro" id="IPR018094">
    <property type="entry name" value="Thymidylate_kinase"/>
</dbReference>
<dbReference type="NCBIfam" id="TIGR00041">
    <property type="entry name" value="DTMP_kinase"/>
    <property type="match status" value="1"/>
</dbReference>
<dbReference type="PANTHER" id="PTHR10344">
    <property type="entry name" value="THYMIDYLATE KINASE"/>
    <property type="match status" value="1"/>
</dbReference>
<dbReference type="PANTHER" id="PTHR10344:SF4">
    <property type="entry name" value="UMP-CMP KINASE 2, MITOCHONDRIAL"/>
    <property type="match status" value="1"/>
</dbReference>
<dbReference type="Pfam" id="PF02223">
    <property type="entry name" value="Thymidylate_kin"/>
    <property type="match status" value="1"/>
</dbReference>
<dbReference type="SUPFAM" id="SSF52540">
    <property type="entry name" value="P-loop containing nucleoside triphosphate hydrolases"/>
    <property type="match status" value="1"/>
</dbReference>
<dbReference type="PROSITE" id="PS01331">
    <property type="entry name" value="THYMIDYLATE_KINASE"/>
    <property type="match status" value="1"/>
</dbReference>
<reference key="1">
    <citation type="journal article" date="2002" name="Proc. Natl. Acad. Sci. U.S.A.">
        <title>Complete genome sequence and comparative genomic analysis of an emerging human pathogen, serotype V Streptococcus agalactiae.</title>
        <authorList>
            <person name="Tettelin H."/>
            <person name="Masignani V."/>
            <person name="Cieslewicz M.J."/>
            <person name="Eisen J.A."/>
            <person name="Peterson S.N."/>
            <person name="Wessels M.R."/>
            <person name="Paulsen I.T."/>
            <person name="Nelson K.E."/>
            <person name="Margarit I."/>
            <person name="Read T.D."/>
            <person name="Madoff L.C."/>
            <person name="Wolf A.M."/>
            <person name="Beanan M.J."/>
            <person name="Brinkac L.M."/>
            <person name="Daugherty S.C."/>
            <person name="DeBoy R.T."/>
            <person name="Durkin A.S."/>
            <person name="Kolonay J.F."/>
            <person name="Madupu R."/>
            <person name="Lewis M.R."/>
            <person name="Radune D."/>
            <person name="Fedorova N.B."/>
            <person name="Scanlan D."/>
            <person name="Khouri H.M."/>
            <person name="Mulligan S."/>
            <person name="Carty H.A."/>
            <person name="Cline R.T."/>
            <person name="Van Aken S.E."/>
            <person name="Gill J."/>
            <person name="Scarselli M."/>
            <person name="Mora M."/>
            <person name="Iacobini E.T."/>
            <person name="Brettoni C."/>
            <person name="Galli G."/>
            <person name="Mariani M."/>
            <person name="Vegni F."/>
            <person name="Maione D."/>
            <person name="Rinaudo D."/>
            <person name="Rappuoli R."/>
            <person name="Telford J.L."/>
            <person name="Kasper D.L."/>
            <person name="Grandi G."/>
            <person name="Fraser C.M."/>
        </authorList>
    </citation>
    <scope>NUCLEOTIDE SEQUENCE [LARGE SCALE GENOMIC DNA]</scope>
    <source>
        <strain>ATCC BAA-611 / 2603 V/R</strain>
    </source>
</reference>
<gene>
    <name evidence="1" type="primary">tmk</name>
    <name type="ordered locus">SAG1575</name>
</gene>
<protein>
    <recommendedName>
        <fullName evidence="1">Thymidylate kinase</fullName>
        <ecNumber evidence="1">2.7.4.9</ecNumber>
    </recommendedName>
    <alternativeName>
        <fullName evidence="1">dTMP kinase</fullName>
    </alternativeName>
</protein>
<accession>Q8DYB3</accession>
<name>KTHY_STRA5</name>
<comment type="function">
    <text evidence="1">Phosphorylation of dTMP to form dTDP in both de novo and salvage pathways of dTTP synthesis.</text>
</comment>
<comment type="catalytic activity">
    <reaction evidence="1">
        <text>dTMP + ATP = dTDP + ADP</text>
        <dbReference type="Rhea" id="RHEA:13517"/>
        <dbReference type="ChEBI" id="CHEBI:30616"/>
        <dbReference type="ChEBI" id="CHEBI:58369"/>
        <dbReference type="ChEBI" id="CHEBI:63528"/>
        <dbReference type="ChEBI" id="CHEBI:456216"/>
        <dbReference type="EC" id="2.7.4.9"/>
    </reaction>
</comment>
<comment type="similarity">
    <text evidence="1">Belongs to the thymidylate kinase family.</text>
</comment>
<evidence type="ECO:0000255" key="1">
    <source>
        <dbReference type="HAMAP-Rule" id="MF_00165"/>
    </source>
</evidence>
<organism>
    <name type="scientific">Streptococcus agalactiae serotype V (strain ATCC BAA-611 / 2603 V/R)</name>
    <dbReference type="NCBI Taxonomy" id="208435"/>
    <lineage>
        <taxon>Bacteria</taxon>
        <taxon>Bacillati</taxon>
        <taxon>Bacillota</taxon>
        <taxon>Bacilli</taxon>
        <taxon>Lactobacillales</taxon>
        <taxon>Streptococcaceae</taxon>
        <taxon>Streptococcus</taxon>
    </lineage>
</organism>
<sequence>MKKGLMISFEGPDGAGKTTVLEAVLPLLREKLSQDILTTREPGGVTISEEIRHIILDVKHTQMDKKTELLLYMAARRQHLVEKVLPALEEGKIVLMDRFIDSSVAYQGSGRGLDKSHIKWLNDYATDSHKPDLTLYFDVPSEVGLERIQKSVQREVNRLDLEQLDMHQRVRQGYLELADSEPNRIVTIDASQQLDEVIAETFSIILDRINQ</sequence>
<proteinExistence type="inferred from homology"/>
<keyword id="KW-0067">ATP-binding</keyword>
<keyword id="KW-0418">Kinase</keyword>
<keyword id="KW-0545">Nucleotide biosynthesis</keyword>
<keyword id="KW-0547">Nucleotide-binding</keyword>
<keyword id="KW-1185">Reference proteome</keyword>
<keyword id="KW-0808">Transferase</keyword>